<sequence length="232" mass="26880">MDLPIQDSHDSSTSPKGKQPTTAEKSATKKEDKVPVKKQKTRTVFSSTQLCVLNDRFQRQKYLSLQQMQELSNILNLSYKQVKTWFQNQRMKSKRWQKNNWLKNSNGVTQGCLVNPTGNLPMWSNQTWNNSTWSNQTQNIQSWSNHSWNTQTWCTQSWNNQAWNSPFYNCGEESLQSCMQFQPNSPASDLQAALEAAGEGLNVIQQTTRYFNTPQTMDLFLNYSMNMQPEDV</sequence>
<organism>
    <name type="scientific">Homo sapiens</name>
    <name type="common">Human</name>
    <dbReference type="NCBI Taxonomy" id="9606"/>
    <lineage>
        <taxon>Eukaryota</taxon>
        <taxon>Metazoa</taxon>
        <taxon>Chordata</taxon>
        <taxon>Craniata</taxon>
        <taxon>Vertebrata</taxon>
        <taxon>Euteleostomi</taxon>
        <taxon>Mammalia</taxon>
        <taxon>Eutheria</taxon>
        <taxon>Euarchontoglires</taxon>
        <taxon>Primates</taxon>
        <taxon>Haplorrhini</taxon>
        <taxon>Catarrhini</taxon>
        <taxon>Hominidae</taxon>
        <taxon>Homo</taxon>
    </lineage>
</organism>
<name>NANG2_HUMAN</name>
<proteinExistence type="uncertain"/>
<reference key="1">
    <citation type="journal article" date="2004" name="Dev. Dyn.">
        <title>Identification, cloning and expression analysis of the pluripotency promoting Nanog genes in mouse and human.</title>
        <authorList>
            <person name="Hart A.H."/>
            <person name="Hartley L."/>
            <person name="Ibrahim M."/>
            <person name="Robb L."/>
        </authorList>
    </citation>
    <scope>NUCLEOTIDE SEQUENCE [MRNA]</scope>
    <scope>DEVELOPMENTAL STAGE</scope>
    <source>
        <tissue>Embryonic stem cell</tissue>
    </source>
</reference>
<reference key="2">
    <citation type="journal article" date="2004" name="Nat. Genet.">
        <title>Complete sequencing and characterization of 21,243 full-length human cDNAs.</title>
        <authorList>
            <person name="Ota T."/>
            <person name="Suzuki Y."/>
            <person name="Nishikawa T."/>
            <person name="Otsuki T."/>
            <person name="Sugiyama T."/>
            <person name="Irie R."/>
            <person name="Wakamatsu A."/>
            <person name="Hayashi K."/>
            <person name="Sato H."/>
            <person name="Nagai K."/>
            <person name="Kimura K."/>
            <person name="Makita H."/>
            <person name="Sekine M."/>
            <person name="Obayashi M."/>
            <person name="Nishi T."/>
            <person name="Shibahara T."/>
            <person name="Tanaka T."/>
            <person name="Ishii S."/>
            <person name="Yamamoto J."/>
            <person name="Saito K."/>
            <person name="Kawai Y."/>
            <person name="Isono Y."/>
            <person name="Nakamura Y."/>
            <person name="Nagahari K."/>
            <person name="Murakami K."/>
            <person name="Yasuda T."/>
            <person name="Iwayanagi T."/>
            <person name="Wagatsuma M."/>
            <person name="Shiratori A."/>
            <person name="Sudo H."/>
            <person name="Hosoiri T."/>
            <person name="Kaku Y."/>
            <person name="Kodaira H."/>
            <person name="Kondo H."/>
            <person name="Sugawara M."/>
            <person name="Takahashi M."/>
            <person name="Kanda K."/>
            <person name="Yokoi T."/>
            <person name="Furuya T."/>
            <person name="Kikkawa E."/>
            <person name="Omura Y."/>
            <person name="Abe K."/>
            <person name="Kamihara K."/>
            <person name="Katsuta N."/>
            <person name="Sato K."/>
            <person name="Tanikawa M."/>
            <person name="Yamazaki M."/>
            <person name="Ninomiya K."/>
            <person name="Ishibashi T."/>
            <person name="Yamashita H."/>
            <person name="Murakawa K."/>
            <person name="Fujimori K."/>
            <person name="Tanai H."/>
            <person name="Kimata M."/>
            <person name="Watanabe M."/>
            <person name="Hiraoka S."/>
            <person name="Chiba Y."/>
            <person name="Ishida S."/>
            <person name="Ono Y."/>
            <person name="Takiguchi S."/>
            <person name="Watanabe S."/>
            <person name="Yosida M."/>
            <person name="Hotuta T."/>
            <person name="Kusano J."/>
            <person name="Kanehori K."/>
            <person name="Takahashi-Fujii A."/>
            <person name="Hara H."/>
            <person name="Tanase T.-O."/>
            <person name="Nomura Y."/>
            <person name="Togiya S."/>
            <person name="Komai F."/>
            <person name="Hara R."/>
            <person name="Takeuchi K."/>
            <person name="Arita M."/>
            <person name="Imose N."/>
            <person name="Musashino K."/>
            <person name="Yuuki H."/>
            <person name="Oshima A."/>
            <person name="Sasaki N."/>
            <person name="Aotsuka S."/>
            <person name="Yoshikawa Y."/>
            <person name="Matsunawa H."/>
            <person name="Ichihara T."/>
            <person name="Shiohata N."/>
            <person name="Sano S."/>
            <person name="Moriya S."/>
            <person name="Momiyama H."/>
            <person name="Satoh N."/>
            <person name="Takami S."/>
            <person name="Terashima Y."/>
            <person name="Suzuki O."/>
            <person name="Nakagawa S."/>
            <person name="Senoh A."/>
            <person name="Mizoguchi H."/>
            <person name="Goto Y."/>
            <person name="Shimizu F."/>
            <person name="Wakebe H."/>
            <person name="Hishigaki H."/>
            <person name="Watanabe T."/>
            <person name="Sugiyama A."/>
            <person name="Takemoto M."/>
            <person name="Kawakami B."/>
            <person name="Yamazaki M."/>
            <person name="Watanabe K."/>
            <person name="Kumagai A."/>
            <person name="Itakura S."/>
            <person name="Fukuzumi Y."/>
            <person name="Fujimori Y."/>
            <person name="Komiyama M."/>
            <person name="Tashiro H."/>
            <person name="Tanigami A."/>
            <person name="Fujiwara T."/>
            <person name="Ono T."/>
            <person name="Yamada K."/>
            <person name="Fujii Y."/>
            <person name="Ozaki K."/>
            <person name="Hirao M."/>
            <person name="Ohmori Y."/>
            <person name="Kawabata A."/>
            <person name="Hikiji T."/>
            <person name="Kobatake N."/>
            <person name="Inagaki H."/>
            <person name="Ikema Y."/>
            <person name="Okamoto S."/>
            <person name="Okitani R."/>
            <person name="Kawakami T."/>
            <person name="Noguchi S."/>
            <person name="Itoh T."/>
            <person name="Shigeta K."/>
            <person name="Senba T."/>
            <person name="Matsumura K."/>
            <person name="Nakajima Y."/>
            <person name="Mizuno T."/>
            <person name="Morinaga M."/>
            <person name="Sasaki M."/>
            <person name="Togashi T."/>
            <person name="Oyama M."/>
            <person name="Hata H."/>
            <person name="Watanabe M."/>
            <person name="Komatsu T."/>
            <person name="Mizushima-Sugano J."/>
            <person name="Satoh T."/>
            <person name="Shirai Y."/>
            <person name="Takahashi Y."/>
            <person name="Nakagawa K."/>
            <person name="Okumura K."/>
            <person name="Nagase T."/>
            <person name="Nomura N."/>
            <person name="Kikuchi H."/>
            <person name="Masuho Y."/>
            <person name="Yamashita R."/>
            <person name="Nakai K."/>
            <person name="Yada T."/>
            <person name="Nakamura Y."/>
            <person name="Ohara O."/>
            <person name="Isogai T."/>
            <person name="Sugano S."/>
        </authorList>
    </citation>
    <scope>NUCLEOTIDE SEQUENCE [LARGE SCALE MRNA]</scope>
    <source>
        <tissue>Testis</tissue>
    </source>
</reference>
<reference key="3">
    <citation type="journal article" date="2004" name="Genomics">
        <title>Eleven daughters of NANOG.</title>
        <authorList>
            <person name="Booth H.A."/>
            <person name="Holland P.W."/>
        </authorList>
    </citation>
    <scope>GENE FAMILY</scope>
</reference>
<reference key="4">
    <citation type="journal article" date="2006" name="BMC Evol. Biol.">
        <title>Evolution of the NANOG pseudogene family in the human and chimpanzee genomes.</title>
        <authorList>
            <person name="Fairbanks D.J."/>
            <person name="Maughan P.J."/>
        </authorList>
    </citation>
    <scope>GENE FAMILY</scope>
</reference>
<dbReference type="EMBL" id="AY455283">
    <property type="protein sequence ID" value="AAS57555.1"/>
    <property type="molecule type" value="mRNA"/>
</dbReference>
<dbReference type="EMBL" id="AK097770">
    <property type="protein sequence ID" value="BAC05167.1"/>
    <property type="molecule type" value="mRNA"/>
</dbReference>
<dbReference type="SMR" id="Q8N7R0"/>
<dbReference type="FunCoup" id="Q8N7R0">
    <property type="interactions" value="42"/>
</dbReference>
<dbReference type="GlyGen" id="Q8N7R0">
    <property type="glycosylation" value="1 site, 1 O-linked glycan (1 site)"/>
</dbReference>
<dbReference type="BioMuta" id="HGNC:23099"/>
<dbReference type="DMDM" id="74762537"/>
<dbReference type="jPOST" id="Q8N7R0"/>
<dbReference type="MassIVE" id="Q8N7R0"/>
<dbReference type="PeptideAtlas" id="Q8N7R0"/>
<dbReference type="ProteomicsDB" id="72319"/>
<dbReference type="AGR" id="HGNC:23099"/>
<dbReference type="GeneCards" id="NANOGP1"/>
<dbReference type="HGNC" id="HGNC:23099">
    <property type="gene designation" value="NANOGP1"/>
</dbReference>
<dbReference type="neXtProt" id="NX_Q8N7R0"/>
<dbReference type="InParanoid" id="Q8N7R0"/>
<dbReference type="PAN-GO" id="Q8N7R0">
    <property type="GO annotations" value="3 GO annotations based on evolutionary models"/>
</dbReference>
<dbReference type="PhylomeDB" id="Q8N7R0"/>
<dbReference type="Pharos" id="Q8N7R0">
    <property type="development level" value="Tdark"/>
</dbReference>
<dbReference type="Proteomes" id="UP000005640">
    <property type="component" value="Unplaced"/>
</dbReference>
<dbReference type="RNAct" id="Q8N7R0">
    <property type="molecule type" value="protein"/>
</dbReference>
<dbReference type="GO" id="GO:0005634">
    <property type="term" value="C:nucleus"/>
    <property type="evidence" value="ECO:0007669"/>
    <property type="project" value="UniProtKB-SubCell"/>
</dbReference>
<dbReference type="GO" id="GO:0000981">
    <property type="term" value="F:DNA-binding transcription factor activity, RNA polymerase II-specific"/>
    <property type="evidence" value="ECO:0000318"/>
    <property type="project" value="GO_Central"/>
</dbReference>
<dbReference type="GO" id="GO:0000978">
    <property type="term" value="F:RNA polymerase II cis-regulatory region sequence-specific DNA binding"/>
    <property type="evidence" value="ECO:0000318"/>
    <property type="project" value="GO_Central"/>
</dbReference>
<dbReference type="GO" id="GO:0030154">
    <property type="term" value="P:cell differentiation"/>
    <property type="evidence" value="ECO:0000318"/>
    <property type="project" value="GO_Central"/>
</dbReference>
<dbReference type="GO" id="GO:0006357">
    <property type="term" value="P:regulation of transcription by RNA polymerase II"/>
    <property type="evidence" value="ECO:0000318"/>
    <property type="project" value="GO_Central"/>
</dbReference>
<dbReference type="GO" id="GO:0019827">
    <property type="term" value="P:stem cell population maintenance"/>
    <property type="evidence" value="ECO:0000318"/>
    <property type="project" value="GO_Central"/>
</dbReference>
<dbReference type="CDD" id="cd00086">
    <property type="entry name" value="homeodomain"/>
    <property type="match status" value="1"/>
</dbReference>
<dbReference type="FunFam" id="1.10.10.60:FF:000203">
    <property type="entry name" value="Nanog homeobox transcription factor"/>
    <property type="match status" value="1"/>
</dbReference>
<dbReference type="Gene3D" id="1.10.10.60">
    <property type="entry name" value="Homeodomain-like"/>
    <property type="match status" value="1"/>
</dbReference>
<dbReference type="InterPro" id="IPR050460">
    <property type="entry name" value="Distal-less_Homeobox_TF"/>
</dbReference>
<dbReference type="InterPro" id="IPR001356">
    <property type="entry name" value="HD"/>
</dbReference>
<dbReference type="InterPro" id="IPR017970">
    <property type="entry name" value="Homeobox_CS"/>
</dbReference>
<dbReference type="InterPro" id="IPR009057">
    <property type="entry name" value="Homeodomain-like_sf"/>
</dbReference>
<dbReference type="PANTHER" id="PTHR24327">
    <property type="entry name" value="HOMEOBOX PROTEIN"/>
    <property type="match status" value="1"/>
</dbReference>
<dbReference type="PANTHER" id="PTHR24327:SF79">
    <property type="entry name" value="HOMEOBOX PROTEIN NANOG-RELATED"/>
    <property type="match status" value="1"/>
</dbReference>
<dbReference type="Pfam" id="PF00046">
    <property type="entry name" value="Homeodomain"/>
    <property type="match status" value="1"/>
</dbReference>
<dbReference type="SMART" id="SM00389">
    <property type="entry name" value="HOX"/>
    <property type="match status" value="1"/>
</dbReference>
<dbReference type="SUPFAM" id="SSF46689">
    <property type="entry name" value="Homeodomain-like"/>
    <property type="match status" value="1"/>
</dbReference>
<dbReference type="PROSITE" id="PS00027">
    <property type="entry name" value="HOMEOBOX_1"/>
    <property type="match status" value="1"/>
</dbReference>
<dbReference type="PROSITE" id="PS50071">
    <property type="entry name" value="HOMEOBOX_2"/>
    <property type="match status" value="1"/>
</dbReference>
<protein>
    <recommendedName>
        <fullName>Putative homeobox protein NANOG2</fullName>
    </recommendedName>
</protein>
<accession>Q8N7R0</accession>
<keyword id="KW-0238">DNA-binding</keyword>
<keyword id="KW-0371">Homeobox</keyword>
<keyword id="KW-0539">Nucleus</keyword>
<keyword id="KW-1185">Reference proteome</keyword>
<keyword id="KW-0677">Repeat</keyword>
<keyword id="KW-0804">Transcription</keyword>
<keyword id="KW-0805">Transcription regulation</keyword>
<comment type="function">
    <text>Probable transcriptional regulator.</text>
</comment>
<comment type="subcellular location">
    <subcellularLocation>
        <location evidence="2">Nucleus</location>
    </subcellularLocation>
</comment>
<comment type="developmental stage">
    <text evidence="4">Expressed in embryonic stem cells (ES).</text>
</comment>
<comment type="similarity">
    <text evidence="5">Belongs to the Nanog homeobox family.</text>
</comment>
<comment type="caution">
    <text evidence="5">Could be the product of a pseudogene, according to PubMed:15233988.</text>
</comment>
<comment type="caution">
    <text evidence="5">Exists an other tandem duplicated gene (NANOG) and 10 other NANOG-related nucleotide sequences located on different chromosomes, all of which are processed pseudogenes lacking introns (NANOGP2 to NANOGP11); except NANOGP8 which is a retrogene.</text>
</comment>
<feature type="chain" id="PRO_0000261423" description="Putative homeobox protein NANOG2">
    <location>
        <begin position="1"/>
        <end position="232"/>
    </location>
</feature>
<feature type="repeat" description="1">
    <location>
        <begin position="123"/>
        <end position="127"/>
    </location>
</feature>
<feature type="repeat" description="2">
    <location>
        <begin position="128"/>
        <end position="132"/>
    </location>
</feature>
<feature type="repeat" description="3">
    <location>
        <begin position="133"/>
        <end position="137"/>
    </location>
</feature>
<feature type="repeat" description="4">
    <location>
        <begin position="143"/>
        <end position="147"/>
    </location>
</feature>
<feature type="repeat" description="5">
    <location>
        <begin position="148"/>
        <end position="152"/>
    </location>
</feature>
<feature type="repeat" description="6">
    <location>
        <begin position="153"/>
        <end position="157"/>
    </location>
</feature>
<feature type="repeat" description="7">
    <location>
        <begin position="158"/>
        <end position="162"/>
    </location>
</feature>
<feature type="repeat" description="8">
    <location>
        <begin position="163"/>
        <end position="167"/>
    </location>
</feature>
<feature type="region of interest" description="Disordered" evidence="3">
    <location>
        <begin position="1"/>
        <end position="39"/>
    </location>
</feature>
<feature type="region of interest" description="8 X repeats starting with a Trp in each unit">
    <location>
        <begin position="123"/>
        <end position="167"/>
    </location>
</feature>
<feature type="region of interest" description="Sufficient for transactivation activity" evidence="1">
    <location>
        <begin position="123"/>
        <end position="167"/>
    </location>
</feature>
<feature type="region of interest" description="Sufficient for strong transactivation activity" evidence="1">
    <location>
        <begin position="168"/>
        <end position="232"/>
    </location>
</feature>
<feature type="compositionally biased region" description="Polar residues" evidence="3">
    <location>
        <begin position="11"/>
        <end position="25"/>
    </location>
</feature>
<feature type="compositionally biased region" description="Basic and acidic residues" evidence="3">
    <location>
        <begin position="26"/>
        <end position="35"/>
    </location>
</feature>
<gene>
    <name type="primary">NANOGP1</name>
    <name type="synonym">NANOG2</name>
</gene>
<evidence type="ECO:0000250" key="1"/>
<evidence type="ECO:0000255" key="2">
    <source>
        <dbReference type="PROSITE-ProRule" id="PRU00108"/>
    </source>
</evidence>
<evidence type="ECO:0000256" key="3">
    <source>
        <dbReference type="SAM" id="MobiDB-lite"/>
    </source>
</evidence>
<evidence type="ECO:0000269" key="4">
    <source>
    </source>
</evidence>
<evidence type="ECO:0000305" key="5"/>